<protein>
    <recommendedName>
        <fullName>Probable tRNA-dihydrouridine synthase</fullName>
        <ecNumber>1.3.1.-</ecNumber>
    </recommendedName>
</protein>
<name>DUS_STAAN</name>
<proteinExistence type="evidence at protein level"/>
<reference key="1">
    <citation type="journal article" date="2001" name="Lancet">
        <title>Whole genome sequencing of meticillin-resistant Staphylococcus aureus.</title>
        <authorList>
            <person name="Kuroda M."/>
            <person name="Ohta T."/>
            <person name="Uchiyama I."/>
            <person name="Baba T."/>
            <person name="Yuzawa H."/>
            <person name="Kobayashi I."/>
            <person name="Cui L."/>
            <person name="Oguchi A."/>
            <person name="Aoki K."/>
            <person name="Nagai Y."/>
            <person name="Lian J.-Q."/>
            <person name="Ito T."/>
            <person name="Kanamori M."/>
            <person name="Matsumaru H."/>
            <person name="Maruyama A."/>
            <person name="Murakami H."/>
            <person name="Hosoyama A."/>
            <person name="Mizutani-Ui Y."/>
            <person name="Takahashi N.K."/>
            <person name="Sawano T."/>
            <person name="Inoue R."/>
            <person name="Kaito C."/>
            <person name="Sekimizu K."/>
            <person name="Hirakawa H."/>
            <person name="Kuhara S."/>
            <person name="Goto S."/>
            <person name="Yabuzaki J."/>
            <person name="Kanehisa M."/>
            <person name="Yamashita A."/>
            <person name="Oshima K."/>
            <person name="Furuya K."/>
            <person name="Yoshino C."/>
            <person name="Shiba T."/>
            <person name="Hattori M."/>
            <person name="Ogasawara N."/>
            <person name="Hayashi H."/>
            <person name="Hiramatsu K."/>
        </authorList>
    </citation>
    <scope>NUCLEOTIDE SEQUENCE [LARGE SCALE GENOMIC DNA]</scope>
    <source>
        <strain>N315</strain>
    </source>
</reference>
<reference key="2">
    <citation type="submission" date="2007-10" db="UniProtKB">
        <title>Shotgun proteomic analysis of total and membrane protein extracts of S. aureus strain N315.</title>
        <authorList>
            <person name="Vaezzadeh A.R."/>
            <person name="Deshusses J."/>
            <person name="Lescuyer P."/>
            <person name="Hochstrasser D.F."/>
        </authorList>
    </citation>
    <scope>IDENTIFICATION BY MASS SPECTROMETRY [LARGE SCALE ANALYSIS]</scope>
    <source>
        <strain>N315</strain>
    </source>
</reference>
<organism>
    <name type="scientific">Staphylococcus aureus (strain N315)</name>
    <dbReference type="NCBI Taxonomy" id="158879"/>
    <lineage>
        <taxon>Bacteria</taxon>
        <taxon>Bacillati</taxon>
        <taxon>Bacillota</taxon>
        <taxon>Bacilli</taxon>
        <taxon>Bacillales</taxon>
        <taxon>Staphylococcaceae</taxon>
        <taxon>Staphylococcus</taxon>
    </lineage>
</organism>
<sequence length="328" mass="37776">MKENFWSELPRPFFILAPMEDVTDIVFRHVVSEAARPDVFFTEFTNTESFCHPEGIHSVRGRLTFSEDEHPMVAHIWGDKPEQFRETSIQLAKMGFKGIDLNMGCPVANVAKKGKGSGLILRPDVAAEIIQATKAGGLPVSVKTRLGYYEIDEWKDWLKHVFEQDIANLSIHLRTRKEMSKVDAHWELIEAIKNLRDEIAPNTLLTINGDIPDRKTGLELAEKYGIDGVMIGRGIFHNPFAFEKEPREHTSKELLDLLRLHLSLFNKYEKDEIRQFKSLRRFFKIYVRGIRGASELRHQLMNTQSIAEARALLDEFEAQMDEDVKIEL</sequence>
<dbReference type="EC" id="1.3.1.-"/>
<dbReference type="EMBL" id="BA000018">
    <property type="protein sequence ID" value="BAB41304.1"/>
    <property type="molecule type" value="Genomic_DNA"/>
</dbReference>
<dbReference type="PIR" id="E89768">
    <property type="entry name" value="E89768"/>
</dbReference>
<dbReference type="RefSeq" id="WP_000662022.1">
    <property type="nucleotide sequence ID" value="NC_002745.2"/>
</dbReference>
<dbReference type="SMR" id="P67717"/>
<dbReference type="EnsemblBacteria" id="BAB41304">
    <property type="protein sequence ID" value="BAB41304"/>
    <property type="gene ID" value="BAB41304"/>
</dbReference>
<dbReference type="KEGG" id="sau:SA0085"/>
<dbReference type="HOGENOM" id="CLU_013299_0_3_9"/>
<dbReference type="GO" id="GO:0050660">
    <property type="term" value="F:flavin adenine dinucleotide binding"/>
    <property type="evidence" value="ECO:0007669"/>
    <property type="project" value="InterPro"/>
</dbReference>
<dbReference type="GO" id="GO:0000049">
    <property type="term" value="F:tRNA binding"/>
    <property type="evidence" value="ECO:0007669"/>
    <property type="project" value="UniProtKB-KW"/>
</dbReference>
<dbReference type="GO" id="GO:0017150">
    <property type="term" value="F:tRNA dihydrouridine synthase activity"/>
    <property type="evidence" value="ECO:0007669"/>
    <property type="project" value="InterPro"/>
</dbReference>
<dbReference type="CDD" id="cd02801">
    <property type="entry name" value="DUS_like_FMN"/>
    <property type="match status" value="1"/>
</dbReference>
<dbReference type="Gene3D" id="3.20.20.70">
    <property type="entry name" value="Aldolase class I"/>
    <property type="match status" value="1"/>
</dbReference>
<dbReference type="Gene3D" id="1.10.1200.80">
    <property type="entry name" value="Putative flavin oxidoreducatase, domain 2"/>
    <property type="match status" value="1"/>
</dbReference>
<dbReference type="InterPro" id="IPR013785">
    <property type="entry name" value="Aldolase_TIM"/>
</dbReference>
<dbReference type="InterPro" id="IPR035587">
    <property type="entry name" value="DUS-like_FMN-bd"/>
</dbReference>
<dbReference type="InterPro" id="IPR001269">
    <property type="entry name" value="DUS_fam"/>
</dbReference>
<dbReference type="InterPro" id="IPR024036">
    <property type="entry name" value="tRNA-dHydroUridine_Synthase_C"/>
</dbReference>
<dbReference type="InterPro" id="IPR018517">
    <property type="entry name" value="tRNA_hU_synthase_CS"/>
</dbReference>
<dbReference type="PANTHER" id="PTHR11082:SF25">
    <property type="entry name" value="DUS-LIKE FMN-BINDING DOMAIN-CONTAINING PROTEIN"/>
    <property type="match status" value="1"/>
</dbReference>
<dbReference type="PANTHER" id="PTHR11082">
    <property type="entry name" value="TRNA-DIHYDROURIDINE SYNTHASE"/>
    <property type="match status" value="1"/>
</dbReference>
<dbReference type="Pfam" id="PF01207">
    <property type="entry name" value="Dus"/>
    <property type="match status" value="1"/>
</dbReference>
<dbReference type="PIRSF" id="PIRSF006621">
    <property type="entry name" value="Dus"/>
    <property type="match status" value="1"/>
</dbReference>
<dbReference type="SUPFAM" id="SSF51395">
    <property type="entry name" value="FMN-linked oxidoreductases"/>
    <property type="match status" value="1"/>
</dbReference>
<dbReference type="PROSITE" id="PS01136">
    <property type="entry name" value="UPF0034"/>
    <property type="match status" value="1"/>
</dbReference>
<keyword id="KW-0285">Flavoprotein</keyword>
<keyword id="KW-0288">FMN</keyword>
<keyword id="KW-0521">NADP</keyword>
<keyword id="KW-0560">Oxidoreductase</keyword>
<keyword id="KW-0694">RNA-binding</keyword>
<keyword id="KW-0819">tRNA processing</keyword>
<keyword id="KW-0820">tRNA-binding</keyword>
<gene>
    <name type="primary">dus</name>
    <name type="ordered locus">SA0085</name>
</gene>
<feature type="chain" id="PRO_0000162144" description="Probable tRNA-dihydrouridine synthase">
    <location>
        <begin position="1"/>
        <end position="328"/>
    </location>
</feature>
<feature type="active site" description="Proton donor" evidence="2">
    <location>
        <position position="105"/>
    </location>
</feature>
<feature type="binding site" evidence="1">
    <location>
        <begin position="18"/>
        <end position="20"/>
    </location>
    <ligand>
        <name>FMN</name>
        <dbReference type="ChEBI" id="CHEBI:58210"/>
    </ligand>
</feature>
<feature type="binding site" evidence="1">
    <location>
        <position position="143"/>
    </location>
    <ligand>
        <name>FMN</name>
        <dbReference type="ChEBI" id="CHEBI:58210"/>
    </ligand>
</feature>
<feature type="binding site" evidence="1">
    <location>
        <begin position="208"/>
        <end position="210"/>
    </location>
    <ligand>
        <name>FMN</name>
        <dbReference type="ChEBI" id="CHEBI:58210"/>
    </ligand>
</feature>
<feature type="binding site" evidence="1">
    <location>
        <begin position="232"/>
        <end position="233"/>
    </location>
    <ligand>
        <name>FMN</name>
        <dbReference type="ChEBI" id="CHEBI:58210"/>
    </ligand>
</feature>
<evidence type="ECO:0000250" key="1">
    <source>
        <dbReference type="UniProtKB" id="P33371"/>
    </source>
</evidence>
<evidence type="ECO:0000250" key="2">
    <source>
        <dbReference type="UniProtKB" id="Q5SMC7"/>
    </source>
</evidence>
<evidence type="ECO:0000305" key="3"/>
<accession>P67717</accession>
<accession>Q99XC3</accession>
<comment type="function">
    <text evidence="1">Catalyzes the synthesis of 5,6-dihydrouridine (D), a modified base found in the D-loop of most tRNAs, via the reduction of the C5-C6 double bond in target uridines.</text>
</comment>
<comment type="catalytic activity">
    <reaction evidence="1">
        <text>a 5,6-dihydrouridine in tRNA + NAD(+) = a uridine in tRNA + NADH + H(+)</text>
        <dbReference type="Rhea" id="RHEA:54452"/>
        <dbReference type="Rhea" id="RHEA-COMP:13339"/>
        <dbReference type="Rhea" id="RHEA-COMP:13887"/>
        <dbReference type="ChEBI" id="CHEBI:15378"/>
        <dbReference type="ChEBI" id="CHEBI:57540"/>
        <dbReference type="ChEBI" id="CHEBI:57945"/>
        <dbReference type="ChEBI" id="CHEBI:65315"/>
        <dbReference type="ChEBI" id="CHEBI:74443"/>
    </reaction>
</comment>
<comment type="catalytic activity">
    <reaction evidence="1">
        <text>a 5,6-dihydrouridine in tRNA + NADP(+) = a uridine in tRNA + NADPH + H(+)</text>
        <dbReference type="Rhea" id="RHEA:23624"/>
        <dbReference type="Rhea" id="RHEA-COMP:13339"/>
        <dbReference type="Rhea" id="RHEA-COMP:13887"/>
        <dbReference type="ChEBI" id="CHEBI:15378"/>
        <dbReference type="ChEBI" id="CHEBI:57783"/>
        <dbReference type="ChEBI" id="CHEBI:58349"/>
        <dbReference type="ChEBI" id="CHEBI:65315"/>
        <dbReference type="ChEBI" id="CHEBI:74443"/>
    </reaction>
</comment>
<comment type="cofactor">
    <cofactor evidence="1">
        <name>FMN</name>
        <dbReference type="ChEBI" id="CHEBI:58210"/>
    </cofactor>
</comment>
<comment type="similarity">
    <text evidence="3">Belongs to the Dus family.</text>
</comment>